<dbReference type="EC" id="2.1.1.177" evidence="1"/>
<dbReference type="EMBL" id="CP001029">
    <property type="protein sequence ID" value="ACB80408.1"/>
    <property type="molecule type" value="Genomic_DNA"/>
</dbReference>
<dbReference type="RefSeq" id="WP_012454142.1">
    <property type="nucleotide sequence ID" value="NC_010725.1"/>
</dbReference>
<dbReference type="SMR" id="B1Z888"/>
<dbReference type="STRING" id="441620.Mpop_2246"/>
<dbReference type="KEGG" id="mpo:Mpop_2246"/>
<dbReference type="eggNOG" id="COG1576">
    <property type="taxonomic scope" value="Bacteria"/>
</dbReference>
<dbReference type="HOGENOM" id="CLU_100552_1_1_5"/>
<dbReference type="OrthoDB" id="9806643at2"/>
<dbReference type="Proteomes" id="UP000007136">
    <property type="component" value="Chromosome"/>
</dbReference>
<dbReference type="GO" id="GO:0005737">
    <property type="term" value="C:cytoplasm"/>
    <property type="evidence" value="ECO:0007669"/>
    <property type="project" value="UniProtKB-SubCell"/>
</dbReference>
<dbReference type="GO" id="GO:0070038">
    <property type="term" value="F:rRNA (pseudouridine-N3-)-methyltransferase activity"/>
    <property type="evidence" value="ECO:0007669"/>
    <property type="project" value="UniProtKB-UniRule"/>
</dbReference>
<dbReference type="CDD" id="cd18081">
    <property type="entry name" value="RlmH-like"/>
    <property type="match status" value="1"/>
</dbReference>
<dbReference type="Gene3D" id="3.40.1280.10">
    <property type="match status" value="1"/>
</dbReference>
<dbReference type="HAMAP" id="MF_00658">
    <property type="entry name" value="23SrRNA_methyltr_H"/>
    <property type="match status" value="1"/>
</dbReference>
<dbReference type="InterPro" id="IPR029028">
    <property type="entry name" value="Alpha/beta_knot_MTases"/>
</dbReference>
<dbReference type="InterPro" id="IPR003742">
    <property type="entry name" value="RlmH-like"/>
</dbReference>
<dbReference type="InterPro" id="IPR029026">
    <property type="entry name" value="tRNA_m1G_MTases_N"/>
</dbReference>
<dbReference type="NCBIfam" id="NF000989">
    <property type="entry name" value="PRK00103.2-3"/>
    <property type="match status" value="1"/>
</dbReference>
<dbReference type="NCBIfam" id="NF000991">
    <property type="entry name" value="PRK00103.2-5"/>
    <property type="match status" value="1"/>
</dbReference>
<dbReference type="PANTHER" id="PTHR33603">
    <property type="entry name" value="METHYLTRANSFERASE"/>
    <property type="match status" value="1"/>
</dbReference>
<dbReference type="PANTHER" id="PTHR33603:SF1">
    <property type="entry name" value="RIBOSOMAL RNA LARGE SUBUNIT METHYLTRANSFERASE H"/>
    <property type="match status" value="1"/>
</dbReference>
<dbReference type="Pfam" id="PF02590">
    <property type="entry name" value="SPOUT_MTase"/>
    <property type="match status" value="1"/>
</dbReference>
<dbReference type="PIRSF" id="PIRSF004505">
    <property type="entry name" value="MT_bac"/>
    <property type="match status" value="1"/>
</dbReference>
<dbReference type="SUPFAM" id="SSF75217">
    <property type="entry name" value="alpha/beta knot"/>
    <property type="match status" value="1"/>
</dbReference>
<keyword id="KW-0963">Cytoplasm</keyword>
<keyword id="KW-0489">Methyltransferase</keyword>
<keyword id="KW-0698">rRNA processing</keyword>
<keyword id="KW-0949">S-adenosyl-L-methionine</keyword>
<keyword id="KW-0808">Transferase</keyword>
<proteinExistence type="inferred from homology"/>
<evidence type="ECO:0000255" key="1">
    <source>
        <dbReference type="HAMAP-Rule" id="MF_00658"/>
    </source>
</evidence>
<name>RLMH_METPB</name>
<feature type="chain" id="PRO_0000366621" description="Ribosomal RNA large subunit methyltransferase H">
    <location>
        <begin position="1"/>
        <end position="165"/>
    </location>
</feature>
<feature type="binding site" evidence="1">
    <location>
        <position position="109"/>
    </location>
    <ligand>
        <name>S-adenosyl-L-methionine</name>
        <dbReference type="ChEBI" id="CHEBI:59789"/>
    </ligand>
</feature>
<reference key="1">
    <citation type="submission" date="2008-04" db="EMBL/GenBank/DDBJ databases">
        <title>Complete sequence of chromosome of Methylobacterium populi BJ001.</title>
        <authorList>
            <consortium name="US DOE Joint Genome Institute"/>
            <person name="Copeland A."/>
            <person name="Lucas S."/>
            <person name="Lapidus A."/>
            <person name="Glavina del Rio T."/>
            <person name="Dalin E."/>
            <person name="Tice H."/>
            <person name="Bruce D."/>
            <person name="Goodwin L."/>
            <person name="Pitluck S."/>
            <person name="Chertkov O."/>
            <person name="Brettin T."/>
            <person name="Detter J.C."/>
            <person name="Han C."/>
            <person name="Kuske C.R."/>
            <person name="Schmutz J."/>
            <person name="Larimer F."/>
            <person name="Land M."/>
            <person name="Hauser L."/>
            <person name="Kyrpides N."/>
            <person name="Mikhailova N."/>
            <person name="Marx C."/>
            <person name="Richardson P."/>
        </authorList>
    </citation>
    <scope>NUCLEOTIDE SEQUENCE [LARGE SCALE GENOMIC DNA]</scope>
    <source>
        <strain>ATCC BAA-705 / NCIMB 13946 / BJ001</strain>
    </source>
</reference>
<organism>
    <name type="scientific">Methylorubrum populi (strain ATCC BAA-705 / NCIMB 13946 / BJ001)</name>
    <name type="common">Methylobacterium populi</name>
    <dbReference type="NCBI Taxonomy" id="441620"/>
    <lineage>
        <taxon>Bacteria</taxon>
        <taxon>Pseudomonadati</taxon>
        <taxon>Pseudomonadota</taxon>
        <taxon>Alphaproteobacteria</taxon>
        <taxon>Hyphomicrobiales</taxon>
        <taxon>Methylobacteriaceae</taxon>
        <taxon>Methylorubrum</taxon>
    </lineage>
</organism>
<protein>
    <recommendedName>
        <fullName evidence="1">Ribosomal RNA large subunit methyltransferase H</fullName>
        <ecNumber evidence="1">2.1.1.177</ecNumber>
    </recommendedName>
    <alternativeName>
        <fullName evidence="1">23S rRNA (pseudouridine1915-N3)-methyltransferase</fullName>
    </alternativeName>
    <alternativeName>
        <fullName evidence="1">23S rRNA m3Psi1915 methyltransferase</fullName>
    </alternativeName>
    <alternativeName>
        <fullName evidence="1">rRNA (pseudouridine-N3-)-methyltransferase RlmH</fullName>
    </alternativeName>
</protein>
<gene>
    <name evidence="1" type="primary">rlmH</name>
    <name type="ordered locus">Mpop_2246</name>
</gene>
<comment type="function">
    <text evidence="1">Specifically methylates the pseudouridine at position 1915 (m3Psi1915) in 23S rRNA.</text>
</comment>
<comment type="catalytic activity">
    <reaction evidence="1">
        <text>pseudouridine(1915) in 23S rRNA + S-adenosyl-L-methionine = N(3)-methylpseudouridine(1915) in 23S rRNA + S-adenosyl-L-homocysteine + H(+)</text>
        <dbReference type="Rhea" id="RHEA:42752"/>
        <dbReference type="Rhea" id="RHEA-COMP:10221"/>
        <dbReference type="Rhea" id="RHEA-COMP:10222"/>
        <dbReference type="ChEBI" id="CHEBI:15378"/>
        <dbReference type="ChEBI" id="CHEBI:57856"/>
        <dbReference type="ChEBI" id="CHEBI:59789"/>
        <dbReference type="ChEBI" id="CHEBI:65314"/>
        <dbReference type="ChEBI" id="CHEBI:74486"/>
        <dbReference type="EC" id="2.1.1.177"/>
    </reaction>
</comment>
<comment type="subunit">
    <text evidence="1">Homodimer.</text>
</comment>
<comment type="subcellular location">
    <subcellularLocation>
        <location evidence="1">Cytoplasm</location>
    </subcellularLocation>
</comment>
<comment type="similarity">
    <text evidence="1">Belongs to the RNA methyltransferase RlmH family.</text>
</comment>
<sequence>MRLLVVAIGRLKNGPERDLAARYRERAVALGKSLGVTACDLTEIPESRARRAADRVAEEAAAILALVPADAAVIACDERGRSDWPSERIAEKIGGWRDAGRGSLVLVIGGADGLHESVRGRADHILAFGAATLPHGLVRVLALEQVYRALTILAGHPYHRGDPEA</sequence>
<accession>B1Z888</accession>